<sequence>MEVLEEPAPGPGGADAAERRGLRRLLLSGFQEELRALLVLAGPAFLAQLMMFLISFISSVFCGHLGKLELDAVTLAIAVINVTGISVGHGLSSACDTLISQTYGSQNLKHVGVILQRGTLILLLCCFPCWALFINTEQILLLFRQDPDVSRLTQTYVMVFIPALPAAFLYTLQVKYLLNQGIVLPQVITGIAANLVNALANYLFLHQLHLGVMGSALANTISQFALAIFLFLYILWRKLHHATWGGWSWECLQDWASFLQLAIPSMLMLCIEWWAYEVGSFLSGILGMVELGAQSITYELAIIVYMIPAGFSVAANVRVGNALGAGNIDQAKKSSAISLIVTELFAVTFCVLLLGCKDLVGYIFTTDWDIVALVAQVVPIYAVSHLFEALACTCGGVLRGTGNQKVGAIVNAIGYYVIGLPIGISLMFVAKLGVIGLWSGIIICSVCQTSCFLVFIARLNWKLACQQAQVHANLKVNVALNSAVSQEPAHPVGPESHGEIMMTDLEKKDEIQLDQQMNQQQALPVHPKDSNKLSGKQLALRRGLLFLGVVLVLVGGILVRVYIRTE</sequence>
<accession>Q5I0E9</accession>
<accession>Q0KKE7</accession>
<dbReference type="EMBL" id="AB248823">
    <property type="protein sequence ID" value="BAF02626.1"/>
    <property type="molecule type" value="mRNA"/>
</dbReference>
<dbReference type="EMBL" id="AB248824">
    <property type="protein sequence ID" value="BAF02627.1"/>
    <property type="molecule type" value="mRNA"/>
</dbReference>
<dbReference type="EMBL" id="BC088413">
    <property type="protein sequence ID" value="AAH88413.1"/>
    <property type="molecule type" value="mRNA"/>
</dbReference>
<dbReference type="RefSeq" id="NP_001014140.1">
    <property type="nucleotide sequence ID" value="NM_001014118.2"/>
</dbReference>
<dbReference type="SMR" id="Q5I0E9"/>
<dbReference type="FunCoup" id="Q5I0E9">
    <property type="interactions" value="122"/>
</dbReference>
<dbReference type="STRING" id="10116.ENSRNOP00000074897"/>
<dbReference type="TCDB" id="2.A.66.1.15">
    <property type="family name" value="the multidrug/oligosaccharidyl-lipid/polysaccharide (mop) flippase superfamily"/>
</dbReference>
<dbReference type="PhosphoSitePlus" id="Q5I0E9"/>
<dbReference type="PaxDb" id="10116-ENSRNOP00000054704"/>
<dbReference type="GeneID" id="360539"/>
<dbReference type="KEGG" id="rno:360539"/>
<dbReference type="UCSC" id="RGD:1311123">
    <property type="organism name" value="rat"/>
</dbReference>
<dbReference type="AGR" id="RGD:1311123"/>
<dbReference type="CTD" id="55244"/>
<dbReference type="RGD" id="1311123">
    <property type="gene designation" value="Slc47a1"/>
</dbReference>
<dbReference type="VEuPathDB" id="HostDB:ENSRNOG00000057404"/>
<dbReference type="eggNOG" id="KOG1347">
    <property type="taxonomic scope" value="Eukaryota"/>
</dbReference>
<dbReference type="HOGENOM" id="CLU_012893_1_3_1"/>
<dbReference type="InParanoid" id="Q5I0E9"/>
<dbReference type="OrthoDB" id="67107at9989"/>
<dbReference type="PhylomeDB" id="Q5I0E9"/>
<dbReference type="TreeFam" id="TF324441"/>
<dbReference type="Reactome" id="R-RNO-425366">
    <property type="pathway name" value="Transport of bile salts and organic acids, metal ions and amine compounds"/>
</dbReference>
<dbReference type="PRO" id="PR:Q5I0E9"/>
<dbReference type="Proteomes" id="UP000002494">
    <property type="component" value="Chromosome 10"/>
</dbReference>
<dbReference type="Bgee" id="ENSRNOG00000057404">
    <property type="expression patterns" value="Expressed in adult mammalian kidney and 12 other cell types or tissues"/>
</dbReference>
<dbReference type="GO" id="GO:0016324">
    <property type="term" value="C:apical plasma membrane"/>
    <property type="evidence" value="ECO:0000266"/>
    <property type="project" value="RGD"/>
</dbReference>
<dbReference type="GO" id="GO:0016323">
    <property type="term" value="C:basolateral plasma membrane"/>
    <property type="evidence" value="ECO:0000266"/>
    <property type="project" value="RGD"/>
</dbReference>
<dbReference type="GO" id="GO:0016020">
    <property type="term" value="C:membrane"/>
    <property type="evidence" value="ECO:0000318"/>
    <property type="project" value="GO_Central"/>
</dbReference>
<dbReference type="GO" id="GO:0005886">
    <property type="term" value="C:plasma membrane"/>
    <property type="evidence" value="ECO:0000314"/>
    <property type="project" value="UniProtKB"/>
</dbReference>
<dbReference type="GO" id="GO:0031982">
    <property type="term" value="C:vesicle"/>
    <property type="evidence" value="ECO:0000314"/>
    <property type="project" value="RGD"/>
</dbReference>
<dbReference type="GO" id="GO:0042887">
    <property type="term" value="F:amide transmembrane transporter activity"/>
    <property type="evidence" value="ECO:0000314"/>
    <property type="project" value="RGD"/>
</dbReference>
<dbReference type="GO" id="GO:0015297">
    <property type="term" value="F:antiporter activity"/>
    <property type="evidence" value="ECO:0000266"/>
    <property type="project" value="RGD"/>
</dbReference>
<dbReference type="GO" id="GO:0015179">
    <property type="term" value="F:L-amino acid transmembrane transporter activity"/>
    <property type="evidence" value="ECO:0000266"/>
    <property type="project" value="RGD"/>
</dbReference>
<dbReference type="GO" id="GO:0061459">
    <property type="term" value="F:L-arginine transmembrane transporter activity"/>
    <property type="evidence" value="ECO:0000266"/>
    <property type="project" value="RGD"/>
</dbReference>
<dbReference type="GO" id="GO:0015101">
    <property type="term" value="F:organic cation transmembrane transporter activity"/>
    <property type="evidence" value="ECO:0000250"/>
    <property type="project" value="UniProtKB"/>
</dbReference>
<dbReference type="GO" id="GO:0140968">
    <property type="term" value="F:polyspecific organic cation:proton antiporter activity"/>
    <property type="evidence" value="ECO:0000314"/>
    <property type="project" value="UniProtKB"/>
</dbReference>
<dbReference type="GO" id="GO:0015489">
    <property type="term" value="F:putrescine transmembrane transporter activity"/>
    <property type="evidence" value="ECO:0000250"/>
    <property type="project" value="UniProtKB"/>
</dbReference>
<dbReference type="GO" id="GO:0015234">
    <property type="term" value="F:thiamine transmembrane transporter activity"/>
    <property type="evidence" value="ECO:0000250"/>
    <property type="project" value="UniProtKB"/>
</dbReference>
<dbReference type="GO" id="GO:0042910">
    <property type="term" value="F:xenobiotic transmembrane transporter activity"/>
    <property type="evidence" value="ECO:0000314"/>
    <property type="project" value="UniProtKB"/>
</dbReference>
<dbReference type="GO" id="GO:0089718">
    <property type="term" value="P:amino acid import across plasma membrane"/>
    <property type="evidence" value="ECO:0000266"/>
    <property type="project" value="RGD"/>
</dbReference>
<dbReference type="GO" id="GO:1902475">
    <property type="term" value="P:L-alpha-amino acid transmembrane transport"/>
    <property type="evidence" value="ECO:0000266"/>
    <property type="project" value="RGD"/>
</dbReference>
<dbReference type="GO" id="GO:0097638">
    <property type="term" value="P:L-arginine import across plasma membrane"/>
    <property type="evidence" value="ECO:0000266"/>
    <property type="project" value="RGD"/>
</dbReference>
<dbReference type="GO" id="GO:0098655">
    <property type="term" value="P:monoatomic cation transmembrane transport"/>
    <property type="evidence" value="ECO:0000314"/>
    <property type="project" value="UniProtKB"/>
</dbReference>
<dbReference type="GO" id="GO:0006812">
    <property type="term" value="P:monoatomic cation transport"/>
    <property type="evidence" value="ECO:0000315"/>
    <property type="project" value="RGD"/>
</dbReference>
<dbReference type="GO" id="GO:0015695">
    <property type="term" value="P:organic cation transport"/>
    <property type="evidence" value="ECO:0000314"/>
    <property type="project" value="RGD"/>
</dbReference>
<dbReference type="GO" id="GO:0015847">
    <property type="term" value="P:putrescine transport"/>
    <property type="evidence" value="ECO:0000250"/>
    <property type="project" value="UniProtKB"/>
</dbReference>
<dbReference type="GO" id="GO:0055085">
    <property type="term" value="P:transmembrane transport"/>
    <property type="evidence" value="ECO:0000314"/>
    <property type="project" value="RGD"/>
</dbReference>
<dbReference type="GO" id="GO:1990961">
    <property type="term" value="P:xenobiotic detoxification by transmembrane export across the plasma membrane"/>
    <property type="evidence" value="ECO:0000266"/>
    <property type="project" value="RGD"/>
</dbReference>
<dbReference type="GO" id="GO:0006855">
    <property type="term" value="P:xenobiotic transmembrane transport"/>
    <property type="evidence" value="ECO:0000266"/>
    <property type="project" value="RGD"/>
</dbReference>
<dbReference type="GO" id="GO:0042908">
    <property type="term" value="P:xenobiotic transport"/>
    <property type="evidence" value="ECO:0000266"/>
    <property type="project" value="RGD"/>
</dbReference>
<dbReference type="CDD" id="cd13132">
    <property type="entry name" value="MATE_eukaryotic"/>
    <property type="match status" value="1"/>
</dbReference>
<dbReference type="InterPro" id="IPR045069">
    <property type="entry name" value="MATE_euk"/>
</dbReference>
<dbReference type="InterPro" id="IPR002528">
    <property type="entry name" value="MATE_fam"/>
</dbReference>
<dbReference type="NCBIfam" id="TIGR00797">
    <property type="entry name" value="matE"/>
    <property type="match status" value="1"/>
</dbReference>
<dbReference type="PANTHER" id="PTHR11206">
    <property type="entry name" value="MULTIDRUG RESISTANCE PROTEIN"/>
    <property type="match status" value="1"/>
</dbReference>
<dbReference type="Pfam" id="PF01554">
    <property type="entry name" value="MatE"/>
    <property type="match status" value="2"/>
</dbReference>
<evidence type="ECO:0000250" key="1">
    <source>
        <dbReference type="UniProtKB" id="Q96FL8"/>
    </source>
</evidence>
<evidence type="ECO:0000255" key="2"/>
<evidence type="ECO:0000269" key="3">
    <source>
    </source>
</evidence>
<evidence type="ECO:0000269" key="4">
    <source>
    </source>
</evidence>
<evidence type="ECO:0000269" key="5">
    <source>
    </source>
</evidence>
<evidence type="ECO:0000269" key="6">
    <source>
    </source>
</evidence>
<evidence type="ECO:0000269" key="7">
    <source>
    </source>
</evidence>
<evidence type="ECO:0000269" key="8">
    <source>
    </source>
</evidence>
<evidence type="ECO:0000269" key="9">
    <source>
    </source>
</evidence>
<evidence type="ECO:0000305" key="10"/>
<evidence type="ECO:0000305" key="11">
    <source>
    </source>
</evidence>
<keyword id="KW-0007">Acetylation</keyword>
<keyword id="KW-0050">Antiport</keyword>
<keyword id="KW-1003">Cell membrane</keyword>
<keyword id="KW-0472">Membrane</keyword>
<keyword id="KW-1185">Reference proteome</keyword>
<keyword id="KW-0812">Transmembrane</keyword>
<keyword id="KW-1133">Transmembrane helix</keyword>
<keyword id="KW-0813">Transport</keyword>
<feature type="chain" id="PRO_0000312849" description="Multidrug and toxin extrusion protein 1">
    <location>
        <begin position="1"/>
        <end position="566"/>
    </location>
</feature>
<feature type="transmembrane region" description="Helical" evidence="2">
    <location>
        <begin position="37"/>
        <end position="57"/>
    </location>
</feature>
<feature type="transmembrane region" description="Helical" evidence="2">
    <location>
        <begin position="72"/>
        <end position="92"/>
    </location>
</feature>
<feature type="transmembrane region" description="Helical" evidence="2">
    <location>
        <begin position="120"/>
        <end position="140"/>
    </location>
</feature>
<feature type="transmembrane region" description="Helical" evidence="2">
    <location>
        <begin position="152"/>
        <end position="172"/>
    </location>
</feature>
<feature type="transmembrane region" description="Helical" evidence="2">
    <location>
        <begin position="176"/>
        <end position="196"/>
    </location>
</feature>
<feature type="transmembrane region" description="Helical" evidence="2">
    <location>
        <begin position="216"/>
        <end position="236"/>
    </location>
</feature>
<feature type="transmembrane region" description="Helical" evidence="2">
    <location>
        <begin position="257"/>
        <end position="276"/>
    </location>
</feature>
<feature type="transmembrane region" description="Helical" evidence="2">
    <location>
        <begin position="295"/>
        <end position="315"/>
    </location>
</feature>
<feature type="transmembrane region" description="Helical" evidence="2">
    <location>
        <begin position="336"/>
        <end position="356"/>
    </location>
</feature>
<feature type="transmembrane region" description="Helical" evidence="2">
    <location>
        <begin position="370"/>
        <end position="390"/>
    </location>
</feature>
<feature type="transmembrane region" description="Helical" evidence="2">
    <location>
        <begin position="409"/>
        <end position="429"/>
    </location>
</feature>
<feature type="transmembrane region" description="Helical" evidence="2">
    <location>
        <begin position="437"/>
        <end position="457"/>
    </location>
</feature>
<feature type="transmembrane region" description="Helical" evidence="2">
    <location>
        <begin position="543"/>
        <end position="563"/>
    </location>
</feature>
<feature type="modified residue" description="N-acetylmethionine" evidence="1">
    <location>
        <position position="1"/>
    </location>
</feature>
<feature type="mutagenesis site" description="Reduction of in TEA uptake." evidence="7">
    <original>C</original>
    <variation>G</variation>
    <variation>F</variation>
    <variation>L</variation>
    <variation>M</variation>
    <location>
        <position position="62"/>
    </location>
</feature>
<feature type="mutagenesis site" description="No change in TEA uptake." evidence="7">
    <original>H</original>
    <variation>Q</variation>
    <location>
        <position position="64"/>
    </location>
</feature>
<feature type="mutagenesis site" description="No change in TEA uptake." evidence="7">
    <original>C</original>
    <variation>G</variation>
    <location>
        <position position="95"/>
    </location>
</feature>
<feature type="mutagenesis site" description="No change in TEA uptake." evidence="7">
    <original>H</original>
    <variation>Q</variation>
    <location>
        <position position="110"/>
    </location>
</feature>
<feature type="mutagenesis site" description="No change in TEA uptake." evidence="7">
    <original>C</original>
    <variation>G</variation>
    <location>
        <position position="125"/>
    </location>
</feature>
<feature type="mutagenesis site" description="Reduction of TEA uptake." evidence="7">
    <original>C</original>
    <variation>G</variation>
    <variation>F</variation>
    <variation>L</variation>
    <variation>M</variation>
    <location>
        <position position="126"/>
    </location>
</feature>
<feature type="mutagenesis site" description="Modest reduction of TEA uptake." evidence="7">
    <original>C</original>
    <variation>G</variation>
    <location>
        <position position="129"/>
    </location>
</feature>
<feature type="mutagenesis site" description="No change in TEA uptake." evidence="7">
    <original>H</original>
    <variation>Q</variation>
    <location>
        <position position="209"/>
    </location>
</feature>
<feature type="mutagenesis site" description="No change in TEA uptake." evidence="7">
    <original>H</original>
    <variation>Q</variation>
    <location>
        <position position="240"/>
    </location>
</feature>
<feature type="mutagenesis site" description="No change in TEA uptake." evidence="7">
    <original>C</original>
    <variation>G</variation>
    <location>
        <position position="251"/>
    </location>
</feature>
<feature type="mutagenesis site" description="No change in TEA uptake." evidence="7">
    <original>C</original>
    <variation>G</variation>
    <location>
        <position position="270"/>
    </location>
</feature>
<feature type="mutagenesis site" description="Modest reduction of TEA uptake." evidence="7">
    <original>C</original>
    <variation>G</variation>
    <location>
        <position position="356"/>
    </location>
</feature>
<feature type="mutagenesis site" description="Important reduction of TEA uptake." evidence="7">
    <original>H</original>
    <variation>Q</variation>
    <variation>F</variation>
    <variation>L</variation>
    <variation>M</variation>
    <variation>P</variation>
    <variation>S</variation>
    <variation>W</variation>
    <location>
        <position position="385"/>
    </location>
</feature>
<feature type="mutagenesis site" description="Modest reduction of TEA uptake." evidence="7">
    <original>C</original>
    <variation>G</variation>
    <location>
        <position position="392"/>
    </location>
</feature>
<feature type="mutagenesis site" description="No change in TEA uptake." evidence="7">
    <original>C</original>
    <variation>G</variation>
    <location>
        <position position="444"/>
    </location>
</feature>
<feature type="mutagenesis site" description="Modest reduction of TEA uptake." evidence="7">
    <original>C</original>
    <variation>G</variation>
    <location>
        <position position="451"/>
    </location>
</feature>
<feature type="mutagenesis site" description="No change in TEA uptake." evidence="7">
    <original>C</original>
    <variation>G</variation>
    <location>
        <position position="465"/>
    </location>
</feature>
<feature type="mutagenesis site" description="No change in TEA uptake." evidence="7">
    <original>H</original>
    <variation>Q</variation>
    <location>
        <position position="471"/>
    </location>
</feature>
<feature type="mutagenesis site" description="No change in TEA uptake." evidence="7">
    <original>H</original>
    <variation>Q</variation>
    <location>
        <position position="490"/>
    </location>
</feature>
<feature type="sequence conflict" description="In Ref. 1; BAF02627." evidence="10" ref="1">
    <original>D</original>
    <variation>Y</variation>
    <location>
        <position position="529"/>
    </location>
</feature>
<name>S47A1_RAT</name>
<gene>
    <name type="primary">Slc47a1</name>
    <name type="synonym">Mate1</name>
</gene>
<protein>
    <recommendedName>
        <fullName>Multidrug and toxin extrusion protein 1</fullName>
        <shortName>MATE-1</shortName>
        <shortName>rMATE-1</shortName>
    </recommendedName>
    <alternativeName>
        <fullName>Solute carrier family 47 member 1</fullName>
    </alternativeName>
</protein>
<reference key="1">
    <citation type="journal article" date="2006" name="Drug Metab. Dispos.">
        <title>Molecular identification and functional characterization of rat multidrug and toxin extrusion type transporter 1 as an organic cation/H+ antiporter in the kidney.</title>
        <authorList>
            <person name="Ohta K.Y."/>
            <person name="Inoue K."/>
            <person name="Hayashi Y."/>
            <person name="Yuasa H."/>
        </authorList>
    </citation>
    <scope>NUCLEOTIDE SEQUENCE [MRNA]</scope>
    <scope>FUNCTION</scope>
    <scope>TRANSPORTER ACTIVITY</scope>
    <scope>TISSUE SPECIFICITY</scope>
    <scope>BIOPHYSICOCHEMICAL PROPERTIES</scope>
    <source>
        <tissue>Kidney</tissue>
    </source>
</reference>
<reference key="2">
    <citation type="journal article" date="2006" name="Pharm. Res.">
        <title>Molecular cloning, functional characterization and tissue distribution of rat H+/organic cation antiporter MATE1.</title>
        <authorList>
            <person name="Terada T."/>
            <person name="Masuda S."/>
            <person name="Asaka J."/>
            <person name="Tsuda M."/>
            <person name="Katsura T."/>
            <person name="Inui K."/>
        </authorList>
    </citation>
    <scope>NUCLEOTIDE SEQUENCE [MRNA]</scope>
    <scope>BIOPHYSICOCHEMICAL PROPERTIES</scope>
    <scope>TISSUE SPECIFICITY</scope>
    <scope>FUNCTION</scope>
    <scope>TRANSPORTER ACTIVITY</scope>
    <source>
        <tissue>Kidney</tissue>
    </source>
</reference>
<reference key="3">
    <citation type="journal article" date="2004" name="Genome Res.">
        <title>The status, quality, and expansion of the NIH full-length cDNA project: the Mammalian Gene Collection (MGC).</title>
        <authorList>
            <consortium name="The MGC Project Team"/>
        </authorList>
    </citation>
    <scope>NUCLEOTIDE SEQUENCE [LARGE SCALE MRNA]</scope>
    <source>
        <tissue>Kidney</tissue>
    </source>
</reference>
<reference key="4">
    <citation type="journal article" date="2007" name="Am. J. Physiol.">
        <title>Oppositely directed H+ gradient functions as a driving force of rat H+/organic cation antiporter MATE1.</title>
        <authorList>
            <person name="Tsuda M."/>
            <person name="Terada T."/>
            <person name="Asaka J."/>
            <person name="Ueba M."/>
            <person name="Katsura T."/>
            <person name="Inui K."/>
        </authorList>
    </citation>
    <scope>FUNCTION</scope>
    <scope>TRANSPORTER ACTIVITY</scope>
    <scope>BIOPHYSICOCHEMICAL PROPERTIES</scope>
</reference>
<reference key="5">
    <citation type="journal article" date="2007" name="Biochem. Pharmacol.">
        <title>Differential contribution of organic cation transporters, OCT2 and MATE1, in platinum agent-induced nephrotoxicity.</title>
        <authorList>
            <person name="Yokoo S."/>
            <person name="Yonezawa A."/>
            <person name="Masuda S."/>
            <person name="Fukatsu A."/>
            <person name="Katsura T."/>
            <person name="Inui K."/>
        </authorList>
    </citation>
    <scope>FUNCTION</scope>
</reference>
<reference key="6">
    <citation type="journal article" date="2007" name="Biochem. Pharmacol.">
        <title>Pharmacokinetic significance of luminal multidrug and toxin extrusion 1 in chronic renal failure rats.</title>
        <authorList>
            <person name="Nishihara K."/>
            <person name="Masuda S."/>
            <person name="Ji L."/>
            <person name="Katsura T."/>
            <person name="Inui K."/>
        </authorList>
    </citation>
    <scope>TISSUE SPECIFICITY</scope>
    <scope>SUBCELLULAR LOCATION</scope>
</reference>
<reference key="7">
    <citation type="journal article" date="2007" name="Mol. Pharmacol.">
        <title>Identification of essential histidine and cysteine residues of the H+/organic cation antiporter multidrug and toxin extrusion (MATE).</title>
        <authorList>
            <person name="Asaka J."/>
            <person name="Terada T."/>
            <person name="Tsuda M."/>
            <person name="Katsura T."/>
            <person name="Inui K."/>
        </authorList>
    </citation>
    <scope>FUNCTION</scope>
    <scope>TRANSPORTER ACTIVITY</scope>
    <scope>MUTAGENESIS OF CYS-62; HIS-64; CYS-95; HIS-110; CYS-125; CYS-126; CYS-129; HIS-209; HIS-240; CYS-251; CYS-270; CYS-356; HIS-385; CYS-392; CYS-444; CYS-451; CYS-465; HIS-471 AND HIS-490</scope>
    <scope>SUBCELLULAR LOCATION</scope>
    <scope>BIOPHYSICOCHEMICAL PROPERTIES</scope>
</reference>
<reference key="8">
    <citation type="journal article" date="2007" name="Mol. Pharm.">
        <title>Transport of organic cations across the blood-testis barrier.</title>
        <authorList>
            <person name="Maeda T."/>
            <person name="Goto A."/>
            <person name="Kobayashi D."/>
            <person name="Tamai I."/>
        </authorList>
    </citation>
    <scope>FUNCTION</scope>
    <scope>TISSUE SPECIFICITY</scope>
</reference>
<organism>
    <name type="scientific">Rattus norvegicus</name>
    <name type="common">Rat</name>
    <dbReference type="NCBI Taxonomy" id="10116"/>
    <lineage>
        <taxon>Eukaryota</taxon>
        <taxon>Metazoa</taxon>
        <taxon>Chordata</taxon>
        <taxon>Craniata</taxon>
        <taxon>Vertebrata</taxon>
        <taxon>Euteleostomi</taxon>
        <taxon>Mammalia</taxon>
        <taxon>Eutheria</taxon>
        <taxon>Euarchontoglires</taxon>
        <taxon>Glires</taxon>
        <taxon>Rodentia</taxon>
        <taxon>Myomorpha</taxon>
        <taxon>Muroidea</taxon>
        <taxon>Muridae</taxon>
        <taxon>Murinae</taxon>
        <taxon>Rattus</taxon>
    </lineage>
</organism>
<proteinExistence type="evidence at protein level"/>
<comment type="function">
    <text evidence="3 4 5 7 8 11">Multidrug efflux pump that functions as a H(+)/organic cation antiporter (PubMed:17047166). Plays a physiological role in the excretion of cationic compounds including endogenous metabolites, drugs, toxins through the kidney and liver, into urine and bile respectively (PubMed:16850272, PubMed:16928787, PubMed:17047166, PubMed:17327464, PubMed:17582384). Mediates the efflux of endogenous compounds such as creatinine, vitamin B1/thiamine, agmatine and estrone-3-sulfate (PubMed:16850272, PubMed:16928787, PubMed:17047166, PubMed:17327464, PubMed:17582384). May also contribute to regulate the transport of cationic compounds in testis across the blood-testis-barrier (Probable).</text>
</comment>
<comment type="catalytic activity">
    <reaction evidence="1">
        <text>thiamine(out) + H(+)(in) = thiamine(in) + H(+)(out)</text>
        <dbReference type="Rhea" id="RHEA:71271"/>
        <dbReference type="ChEBI" id="CHEBI:15378"/>
        <dbReference type="ChEBI" id="CHEBI:18385"/>
    </reaction>
</comment>
<comment type="catalytic activity">
    <reaction evidence="1">
        <text>estrone 3-sulfate(in) + H(+)(out) = estrone 3-sulfate(out) + H(+)(in)</text>
        <dbReference type="Rhea" id="RHEA:72139"/>
        <dbReference type="ChEBI" id="CHEBI:15378"/>
        <dbReference type="ChEBI" id="CHEBI:60050"/>
    </reaction>
</comment>
<comment type="catalytic activity">
    <reaction evidence="1">
        <text>creatinine(in) + H(+)(out) = creatinine(out) + H(+)(in)</text>
        <dbReference type="Rhea" id="RHEA:72183"/>
        <dbReference type="ChEBI" id="CHEBI:15378"/>
        <dbReference type="ChEBI" id="CHEBI:16737"/>
    </reaction>
</comment>
<comment type="catalytic activity">
    <reaction evidence="1">
        <text>agmatine(in) + H(+)(out) = agmatine(out) + H(+)(in)</text>
        <dbReference type="Rhea" id="RHEA:72127"/>
        <dbReference type="ChEBI" id="CHEBI:15378"/>
        <dbReference type="ChEBI" id="CHEBI:58145"/>
    </reaction>
    <physiologicalReaction direction="left-to-right" evidence="1">
        <dbReference type="Rhea" id="RHEA:72128"/>
    </physiologicalReaction>
    <physiologicalReaction direction="right-to-left" evidence="1">
        <dbReference type="Rhea" id="RHEA:72129"/>
    </physiologicalReaction>
</comment>
<comment type="biophysicochemical properties">
    <kinetics>
        <KM evidence="3 4 5 7">0.26 mM for TEA</KM>
        <KM evidence="3 4 5 7">0.003 mM for cimetidine</KM>
    </kinetics>
    <phDependence>
        <text evidence="3 4 5 7">Optimum pH is 7.5-8.4. Active from pH 6 to 8.5.</text>
    </phDependence>
</comment>
<comment type="subcellular location">
    <subcellularLocation>
        <location evidence="6 7">Cell membrane</location>
        <topology evidence="2">Multi-pass membrane protein</topology>
    </subcellularLocation>
    <subcellularLocation>
        <location evidence="1">Apical cell membrane</location>
        <topology evidence="2">Multi-pass membrane protein</topology>
    </subcellularLocation>
    <text evidence="1">Localizes to the plasma membrane; at the brush border membranes of the proximal tubules (kidney) and at the bile caniculi (liver).</text>
</comment>
<comment type="tissue specificity">
    <text evidence="3 4 6 9">Highly expressed in kidney and placenta, moderately in stomach, colon, lung, spleen, skeletal muscle and prostate, and slightly in spleen. In the kidney, found in medulla and cortex, especially in the proximal convoluted and straight tubules. No expression was observed in heart, brain, small intestine and liver. Expressed in Sertoli cells in testis (PubMed:17616214).</text>
</comment>
<comment type="miscellaneous">
    <text evidence="3 4 5 7 8">Mediates the efflux of cationic compounds such as the model cations, tetraethylammonium (TEA), the neurotoxin 1-methyl-4-phenylpyridinium (MPP), the platinum-based drugs cisplatin and oxaliplatin, the drugs procainamide, acyclovir and topotecan, or weak bases that are positively charged at physiological pH, such as cimetidine or the antidiabetic drug metformin.</text>
</comment>
<comment type="similarity">
    <text evidence="10">Belongs to the multi antimicrobial extrusion (MATE) (TC 2.A.66.1) family.</text>
</comment>